<evidence type="ECO:0000250" key="1"/>
<evidence type="ECO:0000250" key="2">
    <source>
        <dbReference type="UniProtKB" id="P0A0C2"/>
    </source>
</evidence>
<evidence type="ECO:0000255" key="3">
    <source>
        <dbReference type="PROSITE-ProRule" id="PRU00532"/>
    </source>
</evidence>
<evidence type="ECO:0000305" key="4"/>
<proteinExistence type="inferred from homology"/>
<accession>P0A0C0</accession>
<accession>P14507</accession>
<name>AACA_STAAM</name>
<keyword id="KW-0012">Acyltransferase</keyword>
<keyword id="KW-0046">Antibiotic resistance</keyword>
<keyword id="KW-0067">ATP-binding</keyword>
<keyword id="KW-0963">Cytoplasm</keyword>
<keyword id="KW-0418">Kinase</keyword>
<keyword id="KW-0511">Multifunctional enzyme</keyword>
<keyword id="KW-0547">Nucleotide-binding</keyword>
<keyword id="KW-0614">Plasmid</keyword>
<keyword id="KW-0808">Transferase</keyword>
<gene>
    <name type="primary">aacA-aphD</name>
    <name type="ordered locus">SAVP026</name>
</gene>
<feature type="chain" id="PRO_0000204797" description="Bifunctional AAC/APH">
    <location>
        <begin position="1"/>
        <end position="479"/>
    </location>
</feature>
<feature type="domain" description="N-acetyltransferase" evidence="3">
    <location>
        <begin position="8"/>
        <end position="180"/>
    </location>
</feature>
<feature type="region of interest" description="Acetyl-CoA binding site" evidence="1">
    <location>
        <begin position="110"/>
        <end position="153"/>
    </location>
</feature>
<feature type="active site" description="Proton acceptor; for phosphotransferase activity" evidence="1">
    <location>
        <position position="374"/>
    </location>
</feature>
<feature type="binding site" evidence="1">
    <location>
        <position position="393"/>
    </location>
    <ligand>
        <name>a gentamycin</name>
        <dbReference type="ChEBI" id="CHEBI:90218"/>
    </ligand>
</feature>
<dbReference type="EC" id="2.3.1.-"/>
<dbReference type="EC" id="2.7.1.190" evidence="2"/>
<dbReference type="EMBL" id="AP003367">
    <property type="protein sequence ID" value="BAB47534.1"/>
    <property type="molecule type" value="Genomic_DNA"/>
</dbReference>
<dbReference type="SMR" id="P0A0C0"/>
<dbReference type="KEGG" id="sav:SAVP026"/>
<dbReference type="HOGENOM" id="CLU_632450_0_0_9"/>
<dbReference type="Proteomes" id="UP000002481">
    <property type="component" value="Plasmid VRSAp"/>
</dbReference>
<dbReference type="GO" id="GO:0005737">
    <property type="term" value="C:cytoplasm"/>
    <property type="evidence" value="ECO:0007669"/>
    <property type="project" value="UniProtKB-SubCell"/>
</dbReference>
<dbReference type="GO" id="GO:0034071">
    <property type="term" value="F:aminoglycoside phosphotransferase activity"/>
    <property type="evidence" value="ECO:0007669"/>
    <property type="project" value="UniProtKB-EC"/>
</dbReference>
<dbReference type="GO" id="GO:0005524">
    <property type="term" value="F:ATP binding"/>
    <property type="evidence" value="ECO:0007669"/>
    <property type="project" value="UniProtKB-KW"/>
</dbReference>
<dbReference type="GO" id="GO:0016410">
    <property type="term" value="F:N-acyltransferase activity"/>
    <property type="evidence" value="ECO:0007669"/>
    <property type="project" value="TreeGrafter"/>
</dbReference>
<dbReference type="GO" id="GO:0046677">
    <property type="term" value="P:response to antibiotic"/>
    <property type="evidence" value="ECO:0007669"/>
    <property type="project" value="UniProtKB-KW"/>
</dbReference>
<dbReference type="CDD" id="cd05120">
    <property type="entry name" value="APH_ChoK_like"/>
    <property type="match status" value="1"/>
</dbReference>
<dbReference type="Gene3D" id="3.40.630.30">
    <property type="match status" value="1"/>
</dbReference>
<dbReference type="Gene3D" id="3.90.1200.10">
    <property type="match status" value="1"/>
</dbReference>
<dbReference type="Gene3D" id="3.30.200.20">
    <property type="entry name" value="Phosphorylase Kinase, domain 1"/>
    <property type="match status" value="1"/>
</dbReference>
<dbReference type="InterPro" id="IPR016181">
    <property type="entry name" value="Acyl_CoA_acyltransferase"/>
</dbReference>
<dbReference type="InterPro" id="IPR002575">
    <property type="entry name" value="Aminoglycoside_PTrfase"/>
</dbReference>
<dbReference type="InterPro" id="IPR000182">
    <property type="entry name" value="GNAT_dom"/>
</dbReference>
<dbReference type="InterPro" id="IPR011009">
    <property type="entry name" value="Kinase-like_dom_sf"/>
</dbReference>
<dbReference type="NCBIfam" id="NF000507">
    <property type="entry name" value="AAC_6p_Ie"/>
    <property type="match status" value="1"/>
</dbReference>
<dbReference type="NCBIfam" id="NF033693">
    <property type="entry name" value="AAC_6p_Ie_fam"/>
    <property type="match status" value="1"/>
</dbReference>
<dbReference type="NCBIfam" id="NF033692">
    <property type="entry name" value="APH_2pp_I_a_f_h"/>
    <property type="match status" value="1"/>
</dbReference>
<dbReference type="NCBIfam" id="NF000508">
    <property type="entry name" value="APH_2pp_Ia"/>
    <property type="match status" value="1"/>
</dbReference>
<dbReference type="PANTHER" id="PTHR31438">
    <property type="entry name" value="LYSINE N-ACYLTRANSFERASE C17G9.06C-RELATED"/>
    <property type="match status" value="1"/>
</dbReference>
<dbReference type="PANTHER" id="PTHR31438:SF1">
    <property type="entry name" value="LYSINE N-ACYLTRANSFERASE C17G9.06C-RELATED"/>
    <property type="match status" value="1"/>
</dbReference>
<dbReference type="Pfam" id="PF13523">
    <property type="entry name" value="Acetyltransf_8"/>
    <property type="match status" value="1"/>
</dbReference>
<dbReference type="Pfam" id="PF01636">
    <property type="entry name" value="APH"/>
    <property type="match status" value="1"/>
</dbReference>
<dbReference type="SUPFAM" id="SSF55729">
    <property type="entry name" value="Acyl-CoA N-acyltransferases (Nat)"/>
    <property type="match status" value="1"/>
</dbReference>
<dbReference type="SUPFAM" id="SSF56112">
    <property type="entry name" value="Protein kinase-like (PK-like)"/>
    <property type="match status" value="1"/>
</dbReference>
<dbReference type="PROSITE" id="PS51186">
    <property type="entry name" value="GNAT"/>
    <property type="match status" value="1"/>
</dbReference>
<geneLocation type="plasmid">
    <name>VRSAp</name>
</geneLocation>
<protein>
    <recommendedName>
        <fullName>Bifunctional AAC/APH</fullName>
    </recommendedName>
    <domain>
        <recommendedName>
            <fullName>6'-aminoglycoside N-acetyltransferase</fullName>
            <ecNumber>2.3.1.-</ecNumber>
        </recommendedName>
        <alternativeName>
            <fullName>AAC(6')</fullName>
        </alternativeName>
    </domain>
    <domain>
        <recommendedName>
            <fullName>Aminoglycoside 2''-phosphotransferase</fullName>
        </recommendedName>
        <alternativeName>
            <fullName>2''-aminoglycoside phosphotransferase</fullName>
            <ecNumber evidence="2">2.7.1.190</ecNumber>
        </alternativeName>
        <alternativeName>
            <fullName>APH(2'')</fullName>
        </alternativeName>
    </domain>
</protein>
<reference key="1">
    <citation type="journal article" date="2001" name="Lancet">
        <title>Whole genome sequencing of meticillin-resistant Staphylococcus aureus.</title>
        <authorList>
            <person name="Kuroda M."/>
            <person name="Ohta T."/>
            <person name="Uchiyama I."/>
            <person name="Baba T."/>
            <person name="Yuzawa H."/>
            <person name="Kobayashi I."/>
            <person name="Cui L."/>
            <person name="Oguchi A."/>
            <person name="Aoki K."/>
            <person name="Nagai Y."/>
            <person name="Lian J.-Q."/>
            <person name="Ito T."/>
            <person name="Kanamori M."/>
            <person name="Matsumaru H."/>
            <person name="Maruyama A."/>
            <person name="Murakami H."/>
            <person name="Hosoyama A."/>
            <person name="Mizutani-Ui Y."/>
            <person name="Takahashi N.K."/>
            <person name="Sawano T."/>
            <person name="Inoue R."/>
            <person name="Kaito C."/>
            <person name="Sekimizu K."/>
            <person name="Hirakawa H."/>
            <person name="Kuhara S."/>
            <person name="Goto S."/>
            <person name="Yabuzaki J."/>
            <person name="Kanehisa M."/>
            <person name="Yamashita A."/>
            <person name="Oshima K."/>
            <person name="Furuya K."/>
            <person name="Yoshino C."/>
            <person name="Shiba T."/>
            <person name="Hattori M."/>
            <person name="Ogasawara N."/>
            <person name="Hayashi H."/>
            <person name="Hiramatsu K."/>
        </authorList>
    </citation>
    <scope>NUCLEOTIDE SEQUENCE [LARGE SCALE GENOMIC DNA]</scope>
    <source>
        <strain>Mu50 / ATCC 700699</strain>
        <plasmid>VRSAp</plasmid>
    </source>
</reference>
<sequence length="479" mass="56855">MNIVENEICIRTLIDDDFPLMLKWLTDERVLEFYGGRDKKYTLESLKKHYTEPWEDEVFRVIIEYNNVPIGYGQIYKMYDELYTDYHYPKTDEIVYGMDQFIGEPNYWSKGIGTRYIKLIFEFLKKERNANAVILDPHKNNPRAIRAYQKSGFRIIEDLPEHELHEGKKEDCYLMEYRYDDNATNVKAMKYLIEHYFDNFKVDSIEIIGSGYDSVAYLVNNEYIFKTKFSTNKKKGYAKEKAIYNFLNTNLETNVKIPNIEYSYISDELSILGYKEIKGTFLTPEIYSTMSEEEQNLLKRDIASFLRQMHGLDYTDISECTIDNKQNVLEEYILLRETIYNDLTDIEKDYIESFMERLNATTVFEGKKCLCHNDFSCNHLLLDGNNRLTGIIDFGDSGIIDEYCDFIYLLEDSEEEIGTNFGEDILRMYGNIDIEKAKEYQDIVEEYYPIETIVYGIKNIKQEFIENGRKEIYKRTYKD</sequence>
<organism>
    <name type="scientific">Staphylococcus aureus (strain Mu50 / ATCC 700699)</name>
    <dbReference type="NCBI Taxonomy" id="158878"/>
    <lineage>
        <taxon>Bacteria</taxon>
        <taxon>Bacillati</taxon>
        <taxon>Bacillota</taxon>
        <taxon>Bacilli</taxon>
        <taxon>Bacillales</taxon>
        <taxon>Staphylococcaceae</taxon>
        <taxon>Staphylococcus</taxon>
    </lineage>
</organism>
<comment type="function">
    <text evidence="2">Involved in resistance to gentamicin, tobramycin, and kanamycin. Tobramycin and kanamycin resistance is due to the ACC activity, specified by N-terminal region. The C-terminal region is a kinase that phosphorylates several 4,6-disubstituted aminoglycosides.</text>
</comment>
<comment type="catalytic activity">
    <reaction evidence="2">
        <text>a gentamycin + GTP = a gentamycin 2''-phosphate + GDP + H(+)</text>
        <dbReference type="Rhea" id="RHEA:48872"/>
        <dbReference type="ChEBI" id="CHEBI:15378"/>
        <dbReference type="ChEBI" id="CHEBI:37565"/>
        <dbReference type="ChEBI" id="CHEBI:58189"/>
        <dbReference type="ChEBI" id="CHEBI:90218"/>
        <dbReference type="ChEBI" id="CHEBI:90219"/>
        <dbReference type="EC" id="2.7.1.190"/>
    </reaction>
</comment>
<comment type="subcellular location">
    <subcellularLocation>
        <location evidence="1">Cytoplasm</location>
    </subcellularLocation>
</comment>
<comment type="similarity">
    <text evidence="4">In the C-terminal section; belongs to the aminoglycoside phosphotransferase family.</text>
</comment>